<comment type="function">
    <text evidence="1">Aspartyl-tRNA synthetase with relaxed tRNA specificity since it is able to aspartylate not only its cognate tRNA(Asp) but also tRNA(Asn). Reaction proceeds in two steps: L-aspartate is first activated by ATP to form Asp-AMP and then transferred to the acceptor end of tRNA(Asp/Asn).</text>
</comment>
<comment type="catalytic activity">
    <reaction evidence="1">
        <text>tRNA(Asx) + L-aspartate + ATP = L-aspartyl-tRNA(Asx) + AMP + diphosphate</text>
        <dbReference type="Rhea" id="RHEA:18349"/>
        <dbReference type="Rhea" id="RHEA-COMP:9710"/>
        <dbReference type="Rhea" id="RHEA-COMP:9711"/>
        <dbReference type="ChEBI" id="CHEBI:29991"/>
        <dbReference type="ChEBI" id="CHEBI:30616"/>
        <dbReference type="ChEBI" id="CHEBI:33019"/>
        <dbReference type="ChEBI" id="CHEBI:78442"/>
        <dbReference type="ChEBI" id="CHEBI:78516"/>
        <dbReference type="ChEBI" id="CHEBI:456215"/>
        <dbReference type="EC" id="6.1.1.23"/>
    </reaction>
</comment>
<comment type="subunit">
    <text evidence="1">Homodimer.</text>
</comment>
<comment type="subcellular location">
    <subcellularLocation>
        <location evidence="1">Cytoplasm</location>
    </subcellularLocation>
</comment>
<comment type="similarity">
    <text evidence="1">Belongs to the class-II aminoacyl-tRNA synthetase family. Type 1 subfamily.</text>
</comment>
<sequence>MLRTHTCGALRKSDVGSPVTLCGWVDSKRDHGGAVFIDLRDRYGLTQVVIGPPEANEALIKQAGHVPNESVILIRGVVADRLEGKTNAKLETGEIEVRSEHFEILSASETPPFTPGQSDLPGEDLRLKYRFLDLRRKEMQQALIRRSEIIKCMRDYFAEHDFIDVETPILGRSTPEGARDYLVPSRVHPSNFYALPQSPQLYKQILMVAGFDRYVQVAKCFRDEDLRADRQPEFTQLDLEMSFVDSEDIIGLIDGLVAKTAKQVLGKDITLPLPRMTYEEAMRRFGSDAPDLRFGLEIVDVTSVAAKTDFRVFRGTADAGNFVRGINVKDSALKFSRRQIDELTAFVQQDFGAKGLAWFRVEDDGTLWSPIAKNFDEEHLAEIKALMGGEPGDLLMFLADTWEVTCKGLSGLRKRLAVELKLYEDGELNCSWVTEFPMFEKDEEAGRYVAMHHPFTAPLEEDLPLLKESPEKCRAQAYDLVINGSEAGGGTIRIHDSKVQSQVFELLGMDEETARDRFGFLLDALRFGAPPHGGIALGVDRWVMLFAGLENIREVIAFPKTQKAADMMTGAPGEVDADQLNELHLRTVSAKT</sequence>
<organism>
    <name type="scientific">Rhodopirellula baltica (strain DSM 10527 / NCIMB 13988 / SH1)</name>
    <dbReference type="NCBI Taxonomy" id="243090"/>
    <lineage>
        <taxon>Bacteria</taxon>
        <taxon>Pseudomonadati</taxon>
        <taxon>Planctomycetota</taxon>
        <taxon>Planctomycetia</taxon>
        <taxon>Pirellulales</taxon>
        <taxon>Pirellulaceae</taxon>
        <taxon>Rhodopirellula</taxon>
    </lineage>
</organism>
<proteinExistence type="inferred from homology"/>
<reference key="1">
    <citation type="journal article" date="2003" name="Proc. Natl. Acad. Sci. U.S.A.">
        <title>Complete genome sequence of the marine planctomycete Pirellula sp. strain 1.</title>
        <authorList>
            <person name="Gloeckner F.O."/>
            <person name="Kube M."/>
            <person name="Bauer M."/>
            <person name="Teeling H."/>
            <person name="Lombardot T."/>
            <person name="Ludwig W."/>
            <person name="Gade D."/>
            <person name="Beck A."/>
            <person name="Borzym K."/>
            <person name="Heitmann K."/>
            <person name="Rabus R."/>
            <person name="Schlesner H."/>
            <person name="Amann R."/>
            <person name="Reinhardt R."/>
        </authorList>
    </citation>
    <scope>NUCLEOTIDE SEQUENCE [LARGE SCALE GENOMIC DNA]</scope>
    <source>
        <strain>DSM 10527 / NCIMB 13988 / SH1</strain>
    </source>
</reference>
<name>SYDND_RHOBA</name>
<protein>
    <recommendedName>
        <fullName evidence="1">Aspartate--tRNA(Asp/Asn) ligase</fullName>
        <ecNumber evidence="1">6.1.1.23</ecNumber>
    </recommendedName>
    <alternativeName>
        <fullName evidence="1">Aspartyl-tRNA synthetase</fullName>
        <shortName evidence="1">AspRS</shortName>
    </alternativeName>
    <alternativeName>
        <fullName evidence="1">Non-discriminating aspartyl-tRNA synthetase</fullName>
        <shortName evidence="1">ND-AspRS</shortName>
    </alternativeName>
</protein>
<keyword id="KW-0030">Aminoacyl-tRNA synthetase</keyword>
<keyword id="KW-0067">ATP-binding</keyword>
<keyword id="KW-0963">Cytoplasm</keyword>
<keyword id="KW-0436">Ligase</keyword>
<keyword id="KW-0547">Nucleotide-binding</keyword>
<keyword id="KW-0648">Protein biosynthesis</keyword>
<keyword id="KW-1185">Reference proteome</keyword>
<dbReference type="EC" id="6.1.1.23" evidence="1"/>
<dbReference type="EMBL" id="BX294147">
    <property type="protein sequence ID" value="CAD78543.1"/>
    <property type="molecule type" value="Genomic_DNA"/>
</dbReference>
<dbReference type="RefSeq" id="NP_868265.1">
    <property type="nucleotide sequence ID" value="NC_005027.1"/>
</dbReference>
<dbReference type="RefSeq" id="WP_011121776.1">
    <property type="nucleotide sequence ID" value="NC_005027.1"/>
</dbReference>
<dbReference type="SMR" id="Q7UFY6"/>
<dbReference type="FunCoup" id="Q7UFY6">
    <property type="interactions" value="538"/>
</dbReference>
<dbReference type="STRING" id="243090.RB8253"/>
<dbReference type="EnsemblBacteria" id="CAD78543">
    <property type="protein sequence ID" value="CAD78543"/>
    <property type="gene ID" value="RB8253"/>
</dbReference>
<dbReference type="KEGG" id="rba:RB8253"/>
<dbReference type="PATRIC" id="fig|243090.15.peg.3977"/>
<dbReference type="eggNOG" id="COG0173">
    <property type="taxonomic scope" value="Bacteria"/>
</dbReference>
<dbReference type="HOGENOM" id="CLU_014330_3_2_0"/>
<dbReference type="InParanoid" id="Q7UFY6"/>
<dbReference type="OrthoDB" id="9802326at2"/>
<dbReference type="Proteomes" id="UP000001025">
    <property type="component" value="Chromosome"/>
</dbReference>
<dbReference type="GO" id="GO:0005737">
    <property type="term" value="C:cytoplasm"/>
    <property type="evidence" value="ECO:0007669"/>
    <property type="project" value="UniProtKB-SubCell"/>
</dbReference>
<dbReference type="GO" id="GO:0004815">
    <property type="term" value="F:aspartate-tRNA ligase activity"/>
    <property type="evidence" value="ECO:0000318"/>
    <property type="project" value="GO_Central"/>
</dbReference>
<dbReference type="GO" id="GO:0050560">
    <property type="term" value="F:aspartate-tRNA(Asn) ligase activity"/>
    <property type="evidence" value="ECO:0007669"/>
    <property type="project" value="UniProtKB-EC"/>
</dbReference>
<dbReference type="GO" id="GO:0005524">
    <property type="term" value="F:ATP binding"/>
    <property type="evidence" value="ECO:0007669"/>
    <property type="project" value="UniProtKB-UniRule"/>
</dbReference>
<dbReference type="GO" id="GO:0003676">
    <property type="term" value="F:nucleic acid binding"/>
    <property type="evidence" value="ECO:0007669"/>
    <property type="project" value="InterPro"/>
</dbReference>
<dbReference type="GO" id="GO:0006422">
    <property type="term" value="P:aspartyl-tRNA aminoacylation"/>
    <property type="evidence" value="ECO:0000318"/>
    <property type="project" value="GO_Central"/>
</dbReference>
<dbReference type="CDD" id="cd00777">
    <property type="entry name" value="AspRS_core"/>
    <property type="match status" value="1"/>
</dbReference>
<dbReference type="CDD" id="cd04317">
    <property type="entry name" value="EcAspRS_like_N"/>
    <property type="match status" value="1"/>
</dbReference>
<dbReference type="Gene3D" id="3.30.930.10">
    <property type="entry name" value="Bira Bifunctional Protein, Domain 2"/>
    <property type="match status" value="1"/>
</dbReference>
<dbReference type="Gene3D" id="3.30.1360.30">
    <property type="entry name" value="GAD-like domain"/>
    <property type="match status" value="1"/>
</dbReference>
<dbReference type="Gene3D" id="2.40.50.140">
    <property type="entry name" value="Nucleic acid-binding proteins"/>
    <property type="match status" value="1"/>
</dbReference>
<dbReference type="HAMAP" id="MF_00044">
    <property type="entry name" value="Asp_tRNA_synth_type1"/>
    <property type="match status" value="1"/>
</dbReference>
<dbReference type="InterPro" id="IPR004364">
    <property type="entry name" value="Aa-tRNA-synt_II"/>
</dbReference>
<dbReference type="InterPro" id="IPR006195">
    <property type="entry name" value="aa-tRNA-synth_II"/>
</dbReference>
<dbReference type="InterPro" id="IPR045864">
    <property type="entry name" value="aa-tRNA-synth_II/BPL/LPL"/>
</dbReference>
<dbReference type="InterPro" id="IPR004524">
    <property type="entry name" value="Asp-tRNA-ligase_1"/>
</dbReference>
<dbReference type="InterPro" id="IPR047089">
    <property type="entry name" value="Asp-tRNA-ligase_1_N"/>
</dbReference>
<dbReference type="InterPro" id="IPR002312">
    <property type="entry name" value="Asp/Asn-tRNA-synth_IIb"/>
</dbReference>
<dbReference type="InterPro" id="IPR047090">
    <property type="entry name" value="AspRS_core"/>
</dbReference>
<dbReference type="InterPro" id="IPR004115">
    <property type="entry name" value="GAD-like_sf"/>
</dbReference>
<dbReference type="InterPro" id="IPR029351">
    <property type="entry name" value="GAD_dom"/>
</dbReference>
<dbReference type="InterPro" id="IPR012340">
    <property type="entry name" value="NA-bd_OB-fold"/>
</dbReference>
<dbReference type="InterPro" id="IPR004365">
    <property type="entry name" value="NA-bd_OB_tRNA"/>
</dbReference>
<dbReference type="NCBIfam" id="TIGR00459">
    <property type="entry name" value="aspS_bact"/>
    <property type="match status" value="1"/>
</dbReference>
<dbReference type="NCBIfam" id="NF001750">
    <property type="entry name" value="PRK00476.1"/>
    <property type="match status" value="1"/>
</dbReference>
<dbReference type="PANTHER" id="PTHR22594:SF5">
    <property type="entry name" value="ASPARTATE--TRNA LIGASE, MITOCHONDRIAL"/>
    <property type="match status" value="1"/>
</dbReference>
<dbReference type="PANTHER" id="PTHR22594">
    <property type="entry name" value="ASPARTYL/LYSYL-TRNA SYNTHETASE"/>
    <property type="match status" value="1"/>
</dbReference>
<dbReference type="Pfam" id="PF02938">
    <property type="entry name" value="GAD"/>
    <property type="match status" value="1"/>
</dbReference>
<dbReference type="Pfam" id="PF00152">
    <property type="entry name" value="tRNA-synt_2"/>
    <property type="match status" value="1"/>
</dbReference>
<dbReference type="Pfam" id="PF01336">
    <property type="entry name" value="tRNA_anti-codon"/>
    <property type="match status" value="1"/>
</dbReference>
<dbReference type="PRINTS" id="PR01042">
    <property type="entry name" value="TRNASYNTHASP"/>
</dbReference>
<dbReference type="SUPFAM" id="SSF55681">
    <property type="entry name" value="Class II aaRS and biotin synthetases"/>
    <property type="match status" value="1"/>
</dbReference>
<dbReference type="SUPFAM" id="SSF55261">
    <property type="entry name" value="GAD domain-like"/>
    <property type="match status" value="1"/>
</dbReference>
<dbReference type="SUPFAM" id="SSF50249">
    <property type="entry name" value="Nucleic acid-binding proteins"/>
    <property type="match status" value="1"/>
</dbReference>
<dbReference type="PROSITE" id="PS50862">
    <property type="entry name" value="AA_TRNA_LIGASE_II"/>
    <property type="match status" value="1"/>
</dbReference>
<accession>Q7UFY6</accession>
<feature type="chain" id="PRO_0000110930" description="Aspartate--tRNA(Asp/Asn) ligase">
    <location>
        <begin position="1"/>
        <end position="592"/>
    </location>
</feature>
<feature type="region of interest" description="Aspartate" evidence="1">
    <location>
        <begin position="200"/>
        <end position="203"/>
    </location>
</feature>
<feature type="binding site" evidence="1">
    <location>
        <position position="176"/>
    </location>
    <ligand>
        <name>L-aspartate</name>
        <dbReference type="ChEBI" id="CHEBI:29991"/>
    </ligand>
</feature>
<feature type="binding site" evidence="1">
    <location>
        <begin position="222"/>
        <end position="224"/>
    </location>
    <ligand>
        <name>ATP</name>
        <dbReference type="ChEBI" id="CHEBI:30616"/>
    </ligand>
</feature>
<feature type="binding site" evidence="1">
    <location>
        <position position="222"/>
    </location>
    <ligand>
        <name>L-aspartate</name>
        <dbReference type="ChEBI" id="CHEBI:29991"/>
    </ligand>
</feature>
<feature type="binding site" evidence="1">
    <location>
        <position position="231"/>
    </location>
    <ligand>
        <name>ATP</name>
        <dbReference type="ChEBI" id="CHEBI:30616"/>
    </ligand>
</feature>
<feature type="binding site" evidence="1">
    <location>
        <position position="452"/>
    </location>
    <ligand>
        <name>L-aspartate</name>
        <dbReference type="ChEBI" id="CHEBI:29991"/>
    </ligand>
</feature>
<feature type="binding site" evidence="1">
    <location>
        <position position="486"/>
    </location>
    <ligand>
        <name>ATP</name>
        <dbReference type="ChEBI" id="CHEBI:30616"/>
    </ligand>
</feature>
<feature type="binding site" evidence="1">
    <location>
        <position position="493"/>
    </location>
    <ligand>
        <name>L-aspartate</name>
        <dbReference type="ChEBI" id="CHEBI:29991"/>
    </ligand>
</feature>
<feature type="binding site" evidence="1">
    <location>
        <begin position="538"/>
        <end position="541"/>
    </location>
    <ligand>
        <name>ATP</name>
        <dbReference type="ChEBI" id="CHEBI:30616"/>
    </ligand>
</feature>
<feature type="site" description="Important for tRNA non-discrimination" evidence="1">
    <location>
        <position position="31"/>
    </location>
</feature>
<feature type="site" description="Important for tRNA non-discrimination" evidence="1">
    <location>
        <position position="84"/>
    </location>
</feature>
<evidence type="ECO:0000255" key="1">
    <source>
        <dbReference type="HAMAP-Rule" id="MF_00044"/>
    </source>
</evidence>
<gene>
    <name evidence="1" type="primary">aspS</name>
    <name type="ordered locus">RB8253</name>
</gene>